<sequence>MTSTFRHVALIGKYHAPSASAPSENASNALERIADFLRRQGCEVVLDTQSALHAGLTDYPTLDVDGLGRHCDLGLVVGGDGTMLGVSRHLAQYGTPLIGVNQGRLGFVTDIALEDFEATLTPMLQGEYEEDLRPLMCARVIRDGQCVFEALAMNDVVVNRGGTSGMVELRIEVGGRFVSNQRADGLIVATPTGSTAYALSAGGPMMHPSIPAWVMAPIAPHNLSNRPIVLSDANEVTIEVVAGRDVSANFDMQSLASLQHGDRILVSRAHHSVRFLHPKGWNYFATLRKKLGWNEGGA</sequence>
<name>NADK_DELAS</name>
<dbReference type="EC" id="2.7.1.23" evidence="1"/>
<dbReference type="EMBL" id="CP000884">
    <property type="protein sequence ID" value="ABX38049.1"/>
    <property type="molecule type" value="Genomic_DNA"/>
</dbReference>
<dbReference type="RefSeq" id="WP_012207218.1">
    <property type="nucleotide sequence ID" value="NC_010002.1"/>
</dbReference>
<dbReference type="SMR" id="A9BP04"/>
<dbReference type="STRING" id="398578.Daci_5420"/>
<dbReference type="GeneID" id="24114752"/>
<dbReference type="KEGG" id="dac:Daci_5420"/>
<dbReference type="eggNOG" id="COG0061">
    <property type="taxonomic scope" value="Bacteria"/>
</dbReference>
<dbReference type="HOGENOM" id="CLU_008831_0_1_4"/>
<dbReference type="Proteomes" id="UP000000784">
    <property type="component" value="Chromosome"/>
</dbReference>
<dbReference type="GO" id="GO:0005737">
    <property type="term" value="C:cytoplasm"/>
    <property type="evidence" value="ECO:0007669"/>
    <property type="project" value="UniProtKB-SubCell"/>
</dbReference>
<dbReference type="GO" id="GO:0005524">
    <property type="term" value="F:ATP binding"/>
    <property type="evidence" value="ECO:0007669"/>
    <property type="project" value="UniProtKB-KW"/>
</dbReference>
<dbReference type="GO" id="GO:0046872">
    <property type="term" value="F:metal ion binding"/>
    <property type="evidence" value="ECO:0007669"/>
    <property type="project" value="UniProtKB-UniRule"/>
</dbReference>
<dbReference type="GO" id="GO:0051287">
    <property type="term" value="F:NAD binding"/>
    <property type="evidence" value="ECO:0007669"/>
    <property type="project" value="UniProtKB-ARBA"/>
</dbReference>
<dbReference type="GO" id="GO:0003951">
    <property type="term" value="F:NAD+ kinase activity"/>
    <property type="evidence" value="ECO:0007669"/>
    <property type="project" value="UniProtKB-UniRule"/>
</dbReference>
<dbReference type="GO" id="GO:0019674">
    <property type="term" value="P:NAD metabolic process"/>
    <property type="evidence" value="ECO:0007669"/>
    <property type="project" value="InterPro"/>
</dbReference>
<dbReference type="GO" id="GO:0006741">
    <property type="term" value="P:NADP biosynthetic process"/>
    <property type="evidence" value="ECO:0007669"/>
    <property type="project" value="UniProtKB-UniRule"/>
</dbReference>
<dbReference type="Gene3D" id="3.40.50.10330">
    <property type="entry name" value="Probable inorganic polyphosphate/atp-NAD kinase, domain 1"/>
    <property type="match status" value="1"/>
</dbReference>
<dbReference type="Gene3D" id="2.60.200.30">
    <property type="entry name" value="Probable inorganic polyphosphate/atp-NAD kinase, domain 2"/>
    <property type="match status" value="1"/>
</dbReference>
<dbReference type="HAMAP" id="MF_00361">
    <property type="entry name" value="NAD_kinase"/>
    <property type="match status" value="1"/>
</dbReference>
<dbReference type="InterPro" id="IPR017438">
    <property type="entry name" value="ATP-NAD_kinase_N"/>
</dbReference>
<dbReference type="InterPro" id="IPR017437">
    <property type="entry name" value="ATP-NAD_kinase_PpnK-typ_C"/>
</dbReference>
<dbReference type="InterPro" id="IPR016064">
    <property type="entry name" value="NAD/diacylglycerol_kinase_sf"/>
</dbReference>
<dbReference type="InterPro" id="IPR002504">
    <property type="entry name" value="NADK"/>
</dbReference>
<dbReference type="NCBIfam" id="NF002561">
    <property type="entry name" value="PRK02155.1"/>
    <property type="match status" value="1"/>
</dbReference>
<dbReference type="PANTHER" id="PTHR20275">
    <property type="entry name" value="NAD KINASE"/>
    <property type="match status" value="1"/>
</dbReference>
<dbReference type="PANTHER" id="PTHR20275:SF0">
    <property type="entry name" value="NAD KINASE"/>
    <property type="match status" value="1"/>
</dbReference>
<dbReference type="Pfam" id="PF01513">
    <property type="entry name" value="NAD_kinase"/>
    <property type="match status" value="1"/>
</dbReference>
<dbReference type="Pfam" id="PF20143">
    <property type="entry name" value="NAD_kinase_C"/>
    <property type="match status" value="1"/>
</dbReference>
<dbReference type="SUPFAM" id="SSF111331">
    <property type="entry name" value="NAD kinase/diacylglycerol kinase-like"/>
    <property type="match status" value="1"/>
</dbReference>
<proteinExistence type="inferred from homology"/>
<feature type="chain" id="PRO_1000120850" description="NAD kinase">
    <location>
        <begin position="1"/>
        <end position="298"/>
    </location>
</feature>
<feature type="active site" description="Proton acceptor" evidence="1">
    <location>
        <position position="80"/>
    </location>
</feature>
<feature type="binding site" evidence="1">
    <location>
        <begin position="80"/>
        <end position="81"/>
    </location>
    <ligand>
        <name>NAD(+)</name>
        <dbReference type="ChEBI" id="CHEBI:57540"/>
    </ligand>
</feature>
<feature type="binding site" evidence="1">
    <location>
        <begin position="154"/>
        <end position="155"/>
    </location>
    <ligand>
        <name>NAD(+)</name>
        <dbReference type="ChEBI" id="CHEBI:57540"/>
    </ligand>
</feature>
<feature type="binding site" evidence="1">
    <location>
        <position position="182"/>
    </location>
    <ligand>
        <name>NAD(+)</name>
        <dbReference type="ChEBI" id="CHEBI:57540"/>
    </ligand>
</feature>
<feature type="binding site" evidence="1">
    <location>
        <position position="184"/>
    </location>
    <ligand>
        <name>NAD(+)</name>
        <dbReference type="ChEBI" id="CHEBI:57540"/>
    </ligand>
</feature>
<feature type="binding site" evidence="1">
    <location>
        <begin position="195"/>
        <end position="200"/>
    </location>
    <ligand>
        <name>NAD(+)</name>
        <dbReference type="ChEBI" id="CHEBI:57540"/>
    </ligand>
</feature>
<feature type="binding site" evidence="1">
    <location>
        <position position="219"/>
    </location>
    <ligand>
        <name>NAD(+)</name>
        <dbReference type="ChEBI" id="CHEBI:57540"/>
    </ligand>
</feature>
<feature type="binding site" evidence="1">
    <location>
        <position position="253"/>
    </location>
    <ligand>
        <name>NAD(+)</name>
        <dbReference type="ChEBI" id="CHEBI:57540"/>
    </ligand>
</feature>
<accession>A9BP04</accession>
<evidence type="ECO:0000255" key="1">
    <source>
        <dbReference type="HAMAP-Rule" id="MF_00361"/>
    </source>
</evidence>
<gene>
    <name evidence="1" type="primary">nadK</name>
    <name type="ordered locus">Daci_5420</name>
</gene>
<comment type="function">
    <text evidence="1">Involved in the regulation of the intracellular balance of NAD and NADP, and is a key enzyme in the biosynthesis of NADP. Catalyzes specifically the phosphorylation on 2'-hydroxyl of the adenosine moiety of NAD to yield NADP.</text>
</comment>
<comment type="catalytic activity">
    <reaction evidence="1">
        <text>NAD(+) + ATP = ADP + NADP(+) + H(+)</text>
        <dbReference type="Rhea" id="RHEA:18629"/>
        <dbReference type="ChEBI" id="CHEBI:15378"/>
        <dbReference type="ChEBI" id="CHEBI:30616"/>
        <dbReference type="ChEBI" id="CHEBI:57540"/>
        <dbReference type="ChEBI" id="CHEBI:58349"/>
        <dbReference type="ChEBI" id="CHEBI:456216"/>
        <dbReference type="EC" id="2.7.1.23"/>
    </reaction>
</comment>
<comment type="cofactor">
    <cofactor evidence="1">
        <name>a divalent metal cation</name>
        <dbReference type="ChEBI" id="CHEBI:60240"/>
    </cofactor>
</comment>
<comment type="subcellular location">
    <subcellularLocation>
        <location evidence="1">Cytoplasm</location>
    </subcellularLocation>
</comment>
<comment type="similarity">
    <text evidence="1">Belongs to the NAD kinase family.</text>
</comment>
<organism>
    <name type="scientific">Delftia acidovorans (strain DSM 14801 / SPH-1)</name>
    <dbReference type="NCBI Taxonomy" id="398578"/>
    <lineage>
        <taxon>Bacteria</taxon>
        <taxon>Pseudomonadati</taxon>
        <taxon>Pseudomonadota</taxon>
        <taxon>Betaproteobacteria</taxon>
        <taxon>Burkholderiales</taxon>
        <taxon>Comamonadaceae</taxon>
        <taxon>Delftia</taxon>
    </lineage>
</organism>
<reference key="1">
    <citation type="submission" date="2007-11" db="EMBL/GenBank/DDBJ databases">
        <title>Complete sequence of Delftia acidovorans DSM 14801 / SPH-1.</title>
        <authorList>
            <person name="Copeland A."/>
            <person name="Lucas S."/>
            <person name="Lapidus A."/>
            <person name="Barry K."/>
            <person name="Glavina del Rio T."/>
            <person name="Dalin E."/>
            <person name="Tice H."/>
            <person name="Pitluck S."/>
            <person name="Lowry S."/>
            <person name="Clum A."/>
            <person name="Schmutz J."/>
            <person name="Larimer F."/>
            <person name="Land M."/>
            <person name="Hauser L."/>
            <person name="Kyrpides N."/>
            <person name="Kim E."/>
            <person name="Schleheck D."/>
            <person name="Richardson P."/>
        </authorList>
    </citation>
    <scope>NUCLEOTIDE SEQUENCE [LARGE SCALE GENOMIC DNA]</scope>
    <source>
        <strain>DSM 14801 / SPH-1</strain>
    </source>
</reference>
<protein>
    <recommendedName>
        <fullName evidence="1">NAD kinase</fullName>
        <ecNumber evidence="1">2.7.1.23</ecNumber>
    </recommendedName>
    <alternativeName>
        <fullName evidence="1">ATP-dependent NAD kinase</fullName>
    </alternativeName>
</protein>
<keyword id="KW-0067">ATP-binding</keyword>
<keyword id="KW-0963">Cytoplasm</keyword>
<keyword id="KW-0418">Kinase</keyword>
<keyword id="KW-0520">NAD</keyword>
<keyword id="KW-0521">NADP</keyword>
<keyword id="KW-0547">Nucleotide-binding</keyword>
<keyword id="KW-1185">Reference proteome</keyword>
<keyword id="KW-0808">Transferase</keyword>